<reference key="1">
    <citation type="journal article" date="2004" name="Nat. Genet.">
        <title>Comparison of genome degradation in Paratyphi A and Typhi, human-restricted serovars of Salmonella enterica that cause typhoid.</title>
        <authorList>
            <person name="McClelland M."/>
            <person name="Sanderson K.E."/>
            <person name="Clifton S.W."/>
            <person name="Latreille P."/>
            <person name="Porwollik S."/>
            <person name="Sabo A."/>
            <person name="Meyer R."/>
            <person name="Bieri T."/>
            <person name="Ozersky P."/>
            <person name="McLellan M."/>
            <person name="Harkins C.R."/>
            <person name="Wang C."/>
            <person name="Nguyen C."/>
            <person name="Berghoff A."/>
            <person name="Elliott G."/>
            <person name="Kohlberg S."/>
            <person name="Strong C."/>
            <person name="Du F."/>
            <person name="Carter J."/>
            <person name="Kremizki C."/>
            <person name="Layman D."/>
            <person name="Leonard S."/>
            <person name="Sun H."/>
            <person name="Fulton L."/>
            <person name="Nash W."/>
            <person name="Miner T."/>
            <person name="Minx P."/>
            <person name="Delehaunty K."/>
            <person name="Fronick C."/>
            <person name="Magrini V."/>
            <person name="Nhan M."/>
            <person name="Warren W."/>
            <person name="Florea L."/>
            <person name="Spieth J."/>
            <person name="Wilson R.K."/>
        </authorList>
    </citation>
    <scope>NUCLEOTIDE SEQUENCE [LARGE SCALE GENOMIC DNA]</scope>
    <source>
        <strain>ATCC 9150 / SARB42</strain>
    </source>
</reference>
<accession>Q5PN90</accession>
<evidence type="ECO:0000255" key="1">
    <source>
        <dbReference type="HAMAP-Rule" id="MF_00313"/>
    </source>
</evidence>
<evidence type="ECO:0000305" key="2"/>
<proteinExistence type="inferred from homology"/>
<organism>
    <name type="scientific">Salmonella paratyphi A (strain ATCC 9150 / SARB42)</name>
    <dbReference type="NCBI Taxonomy" id="295319"/>
    <lineage>
        <taxon>Bacteria</taxon>
        <taxon>Pseudomonadati</taxon>
        <taxon>Pseudomonadota</taxon>
        <taxon>Gammaproteobacteria</taxon>
        <taxon>Enterobacterales</taxon>
        <taxon>Enterobacteriaceae</taxon>
        <taxon>Salmonella</taxon>
    </lineage>
</organism>
<gene>
    <name evidence="1" type="primary">glsA</name>
    <name type="ordered locus">SPA1330</name>
</gene>
<dbReference type="EC" id="3.5.1.2" evidence="1"/>
<dbReference type="EMBL" id="CP000026">
    <property type="protein sequence ID" value="AAV77275.1"/>
    <property type="status" value="ALT_INIT"/>
    <property type="molecule type" value="Genomic_DNA"/>
</dbReference>
<dbReference type="SMR" id="Q5PN90"/>
<dbReference type="KEGG" id="spt:SPA1330"/>
<dbReference type="HOGENOM" id="CLU_027932_1_1_6"/>
<dbReference type="Proteomes" id="UP000008185">
    <property type="component" value="Chromosome"/>
</dbReference>
<dbReference type="GO" id="GO:0004359">
    <property type="term" value="F:glutaminase activity"/>
    <property type="evidence" value="ECO:0007669"/>
    <property type="project" value="UniProtKB-UniRule"/>
</dbReference>
<dbReference type="GO" id="GO:0006537">
    <property type="term" value="P:glutamate biosynthetic process"/>
    <property type="evidence" value="ECO:0007669"/>
    <property type="project" value="TreeGrafter"/>
</dbReference>
<dbReference type="GO" id="GO:0006543">
    <property type="term" value="P:glutamine catabolic process"/>
    <property type="evidence" value="ECO:0007669"/>
    <property type="project" value="TreeGrafter"/>
</dbReference>
<dbReference type="FunFam" id="3.40.710.10:FF:000005">
    <property type="entry name" value="Glutaminase"/>
    <property type="match status" value="1"/>
</dbReference>
<dbReference type="Gene3D" id="3.40.710.10">
    <property type="entry name" value="DD-peptidase/beta-lactamase superfamily"/>
    <property type="match status" value="1"/>
</dbReference>
<dbReference type="HAMAP" id="MF_00313">
    <property type="entry name" value="Glutaminase"/>
    <property type="match status" value="1"/>
</dbReference>
<dbReference type="InterPro" id="IPR012338">
    <property type="entry name" value="Beta-lactam/transpept-like"/>
</dbReference>
<dbReference type="InterPro" id="IPR015868">
    <property type="entry name" value="Glutaminase"/>
</dbReference>
<dbReference type="NCBIfam" id="TIGR03814">
    <property type="entry name" value="Gln_ase"/>
    <property type="match status" value="1"/>
</dbReference>
<dbReference type="NCBIfam" id="NF002132">
    <property type="entry name" value="PRK00971.1-1"/>
    <property type="match status" value="1"/>
</dbReference>
<dbReference type="NCBIfam" id="NF002133">
    <property type="entry name" value="PRK00971.1-2"/>
    <property type="match status" value="1"/>
</dbReference>
<dbReference type="PANTHER" id="PTHR12544">
    <property type="entry name" value="GLUTAMINASE"/>
    <property type="match status" value="1"/>
</dbReference>
<dbReference type="PANTHER" id="PTHR12544:SF29">
    <property type="entry name" value="GLUTAMINASE"/>
    <property type="match status" value="1"/>
</dbReference>
<dbReference type="Pfam" id="PF04960">
    <property type="entry name" value="Glutaminase"/>
    <property type="match status" value="1"/>
</dbReference>
<dbReference type="SUPFAM" id="SSF56601">
    <property type="entry name" value="beta-lactamase/transpeptidase-like"/>
    <property type="match status" value="1"/>
</dbReference>
<protein>
    <recommendedName>
        <fullName evidence="1">Glutaminase</fullName>
        <ecNumber evidence="1">3.5.1.2</ecNumber>
    </recommendedName>
</protein>
<comment type="catalytic activity">
    <reaction evidence="1">
        <text>L-glutamine + H2O = L-glutamate + NH4(+)</text>
        <dbReference type="Rhea" id="RHEA:15889"/>
        <dbReference type="ChEBI" id="CHEBI:15377"/>
        <dbReference type="ChEBI" id="CHEBI:28938"/>
        <dbReference type="ChEBI" id="CHEBI:29985"/>
        <dbReference type="ChEBI" id="CHEBI:58359"/>
        <dbReference type="EC" id="3.5.1.2"/>
    </reaction>
</comment>
<comment type="subunit">
    <text evidence="1">Homotetramer.</text>
</comment>
<comment type="similarity">
    <text evidence="1">Belongs to the glutaminase family.</text>
</comment>
<comment type="sequence caution" evidence="2">
    <conflict type="erroneous initiation">
        <sequence resource="EMBL-CDS" id="AAV77275"/>
    </conflict>
</comment>
<sequence length="308" mass="33597">MARAMDNAILETILQRVRPLIGQGKVADYIPALASVEGSKLGIAICTVDGQHYQAGDAHERFSIQSISKVLSLVVAMRHYPEEEIWQRVGKDPSGSPFNSLVQLEMEQGIPRNPFINAGALVVCDMLQGRLSAPRQRMLEVVRALCGVSDITYDATVARSEFEHSARNAAIAWLMKSFGNFHHDVPTVLQNYFHYCALKMSCMELARTFVFLANQGEAFHLDEPVVTPMQARQINALMATSGMYQNAGEFAWRVGLPAKSGVGGGIVAIVPHEMAIAVWSPELDPAGNSLAGIAALEQLTQTLGRSVY</sequence>
<feature type="chain" id="PRO_0000336040" description="Glutaminase">
    <location>
        <begin position="1"/>
        <end position="308"/>
    </location>
</feature>
<feature type="binding site" evidence="1">
    <location>
        <position position="66"/>
    </location>
    <ligand>
        <name>substrate</name>
    </ligand>
</feature>
<feature type="binding site" evidence="1">
    <location>
        <position position="117"/>
    </location>
    <ligand>
        <name>substrate</name>
    </ligand>
</feature>
<feature type="binding site" evidence="1">
    <location>
        <position position="161"/>
    </location>
    <ligand>
        <name>substrate</name>
    </ligand>
</feature>
<feature type="binding site" evidence="1">
    <location>
        <position position="168"/>
    </location>
    <ligand>
        <name>substrate</name>
    </ligand>
</feature>
<feature type="binding site" evidence="1">
    <location>
        <position position="192"/>
    </location>
    <ligand>
        <name>substrate</name>
    </ligand>
</feature>
<feature type="binding site" evidence="1">
    <location>
        <position position="244"/>
    </location>
    <ligand>
        <name>substrate</name>
    </ligand>
</feature>
<feature type="binding site" evidence="1">
    <location>
        <position position="262"/>
    </location>
    <ligand>
        <name>substrate</name>
    </ligand>
</feature>
<keyword id="KW-0378">Hydrolase</keyword>
<name>GLSA_SALPA</name>